<dbReference type="EC" id="2.7.7.3" evidence="1"/>
<dbReference type="EMBL" id="FM204884">
    <property type="protein sequence ID" value="CAX00016.1"/>
    <property type="molecule type" value="Genomic_DNA"/>
</dbReference>
<dbReference type="SMR" id="C0MD70"/>
<dbReference type="KEGG" id="seq:SZO_14150"/>
<dbReference type="PATRIC" id="fig|40041.11.peg.1508"/>
<dbReference type="eggNOG" id="COG0669">
    <property type="taxonomic scope" value="Bacteria"/>
</dbReference>
<dbReference type="HOGENOM" id="CLU_100149_0_1_9"/>
<dbReference type="UniPathway" id="UPA00241">
    <property type="reaction ID" value="UER00355"/>
</dbReference>
<dbReference type="Proteomes" id="UP000001368">
    <property type="component" value="Chromosome"/>
</dbReference>
<dbReference type="GO" id="GO:0005737">
    <property type="term" value="C:cytoplasm"/>
    <property type="evidence" value="ECO:0007669"/>
    <property type="project" value="UniProtKB-SubCell"/>
</dbReference>
<dbReference type="GO" id="GO:0005524">
    <property type="term" value="F:ATP binding"/>
    <property type="evidence" value="ECO:0007669"/>
    <property type="project" value="UniProtKB-KW"/>
</dbReference>
<dbReference type="GO" id="GO:0004595">
    <property type="term" value="F:pantetheine-phosphate adenylyltransferase activity"/>
    <property type="evidence" value="ECO:0007669"/>
    <property type="project" value="UniProtKB-UniRule"/>
</dbReference>
<dbReference type="GO" id="GO:0015937">
    <property type="term" value="P:coenzyme A biosynthetic process"/>
    <property type="evidence" value="ECO:0007669"/>
    <property type="project" value="UniProtKB-UniRule"/>
</dbReference>
<dbReference type="CDD" id="cd02163">
    <property type="entry name" value="PPAT"/>
    <property type="match status" value="1"/>
</dbReference>
<dbReference type="Gene3D" id="3.40.50.620">
    <property type="entry name" value="HUPs"/>
    <property type="match status" value="1"/>
</dbReference>
<dbReference type="HAMAP" id="MF_00151">
    <property type="entry name" value="PPAT_bact"/>
    <property type="match status" value="1"/>
</dbReference>
<dbReference type="InterPro" id="IPR004821">
    <property type="entry name" value="Cyt_trans-like"/>
</dbReference>
<dbReference type="InterPro" id="IPR001980">
    <property type="entry name" value="PPAT"/>
</dbReference>
<dbReference type="InterPro" id="IPR014729">
    <property type="entry name" value="Rossmann-like_a/b/a_fold"/>
</dbReference>
<dbReference type="NCBIfam" id="TIGR01510">
    <property type="entry name" value="coaD_prev_kdtB"/>
    <property type="match status" value="1"/>
</dbReference>
<dbReference type="NCBIfam" id="TIGR00125">
    <property type="entry name" value="cyt_tran_rel"/>
    <property type="match status" value="1"/>
</dbReference>
<dbReference type="PANTHER" id="PTHR21342">
    <property type="entry name" value="PHOSPHOPANTETHEINE ADENYLYLTRANSFERASE"/>
    <property type="match status" value="1"/>
</dbReference>
<dbReference type="PANTHER" id="PTHR21342:SF1">
    <property type="entry name" value="PHOSPHOPANTETHEINE ADENYLYLTRANSFERASE"/>
    <property type="match status" value="1"/>
</dbReference>
<dbReference type="Pfam" id="PF01467">
    <property type="entry name" value="CTP_transf_like"/>
    <property type="match status" value="1"/>
</dbReference>
<dbReference type="PRINTS" id="PR01020">
    <property type="entry name" value="LPSBIOSNTHSS"/>
</dbReference>
<dbReference type="SUPFAM" id="SSF52374">
    <property type="entry name" value="Nucleotidylyl transferase"/>
    <property type="match status" value="1"/>
</dbReference>
<sequence length="166" mass="18685">MSGKIGLYTGSFDPVTNGHMDMIKRASHLFEHVYVGIFNNPNKQGFFTFELRAQMLREAVCALPNVTVVSAEHGLAVDLARELSVTHLIRGLRNTADFDYEAGLEYFNHRLAPEIETIYLMATHDLQPISSSRIRELIAFRAPITGLVPQAVINQVEKMNENNKKI</sequence>
<organism>
    <name type="scientific">Streptococcus equi subsp. zooepidemicus (strain H70)</name>
    <dbReference type="NCBI Taxonomy" id="553483"/>
    <lineage>
        <taxon>Bacteria</taxon>
        <taxon>Bacillati</taxon>
        <taxon>Bacillota</taxon>
        <taxon>Bacilli</taxon>
        <taxon>Lactobacillales</taxon>
        <taxon>Streptococcaceae</taxon>
        <taxon>Streptococcus</taxon>
    </lineage>
</organism>
<feature type="chain" id="PRO_1000203433" description="Phosphopantetheine adenylyltransferase">
    <location>
        <begin position="1"/>
        <end position="166"/>
    </location>
</feature>
<feature type="binding site" evidence="1">
    <location>
        <begin position="11"/>
        <end position="12"/>
    </location>
    <ligand>
        <name>ATP</name>
        <dbReference type="ChEBI" id="CHEBI:30616"/>
    </ligand>
</feature>
<feature type="binding site" evidence="1">
    <location>
        <position position="11"/>
    </location>
    <ligand>
        <name>substrate</name>
    </ligand>
</feature>
<feature type="binding site" evidence="1">
    <location>
        <position position="19"/>
    </location>
    <ligand>
        <name>ATP</name>
        <dbReference type="ChEBI" id="CHEBI:30616"/>
    </ligand>
</feature>
<feature type="binding site" evidence="1">
    <location>
        <position position="43"/>
    </location>
    <ligand>
        <name>substrate</name>
    </ligand>
</feature>
<feature type="binding site" evidence="1">
    <location>
        <position position="76"/>
    </location>
    <ligand>
        <name>substrate</name>
    </ligand>
</feature>
<feature type="binding site" evidence="1">
    <location>
        <position position="90"/>
    </location>
    <ligand>
        <name>substrate</name>
    </ligand>
</feature>
<feature type="binding site" evidence="1">
    <location>
        <begin position="91"/>
        <end position="93"/>
    </location>
    <ligand>
        <name>ATP</name>
        <dbReference type="ChEBI" id="CHEBI:30616"/>
    </ligand>
</feature>
<feature type="binding site" evidence="1">
    <location>
        <position position="101"/>
    </location>
    <ligand>
        <name>ATP</name>
        <dbReference type="ChEBI" id="CHEBI:30616"/>
    </ligand>
</feature>
<feature type="binding site" evidence="1">
    <location>
        <begin position="126"/>
        <end position="132"/>
    </location>
    <ligand>
        <name>ATP</name>
        <dbReference type="ChEBI" id="CHEBI:30616"/>
    </ligand>
</feature>
<feature type="site" description="Transition state stabilizer" evidence="1">
    <location>
        <position position="19"/>
    </location>
</feature>
<protein>
    <recommendedName>
        <fullName evidence="1">Phosphopantetheine adenylyltransferase</fullName>
        <ecNumber evidence="1">2.7.7.3</ecNumber>
    </recommendedName>
    <alternativeName>
        <fullName evidence="1">Dephospho-CoA pyrophosphorylase</fullName>
    </alternativeName>
    <alternativeName>
        <fullName evidence="1">Pantetheine-phosphate adenylyltransferase</fullName>
        <shortName evidence="1">PPAT</shortName>
    </alternativeName>
</protein>
<proteinExistence type="inferred from homology"/>
<comment type="function">
    <text evidence="1">Reversibly transfers an adenylyl group from ATP to 4'-phosphopantetheine, yielding dephospho-CoA (dPCoA) and pyrophosphate.</text>
</comment>
<comment type="catalytic activity">
    <reaction evidence="1">
        <text>(R)-4'-phosphopantetheine + ATP + H(+) = 3'-dephospho-CoA + diphosphate</text>
        <dbReference type="Rhea" id="RHEA:19801"/>
        <dbReference type="ChEBI" id="CHEBI:15378"/>
        <dbReference type="ChEBI" id="CHEBI:30616"/>
        <dbReference type="ChEBI" id="CHEBI:33019"/>
        <dbReference type="ChEBI" id="CHEBI:57328"/>
        <dbReference type="ChEBI" id="CHEBI:61723"/>
        <dbReference type="EC" id="2.7.7.3"/>
    </reaction>
</comment>
<comment type="cofactor">
    <cofactor evidence="1">
        <name>Mg(2+)</name>
        <dbReference type="ChEBI" id="CHEBI:18420"/>
    </cofactor>
</comment>
<comment type="pathway">
    <text evidence="1">Cofactor biosynthesis; coenzyme A biosynthesis; CoA from (R)-pantothenate: step 4/5.</text>
</comment>
<comment type="subunit">
    <text evidence="1">Homohexamer.</text>
</comment>
<comment type="subcellular location">
    <subcellularLocation>
        <location evidence="1">Cytoplasm</location>
    </subcellularLocation>
</comment>
<comment type="similarity">
    <text evidence="1">Belongs to the bacterial CoaD family.</text>
</comment>
<reference key="1">
    <citation type="journal article" date="2009" name="PLoS Pathog.">
        <title>Genomic evidence for the evolution of Streptococcus equi: host restriction, increased virulence, and genetic exchange with human pathogens.</title>
        <authorList>
            <person name="Holden M.T.G."/>
            <person name="Heather Z."/>
            <person name="Paillot R."/>
            <person name="Steward K.F."/>
            <person name="Webb K."/>
            <person name="Ainslie F."/>
            <person name="Jourdan T."/>
            <person name="Bason N.C."/>
            <person name="Holroyd N.E."/>
            <person name="Mungall K."/>
            <person name="Quail M.A."/>
            <person name="Sanders M."/>
            <person name="Simmonds M."/>
            <person name="Willey D."/>
            <person name="Brooks K."/>
            <person name="Aanensen D.M."/>
            <person name="Spratt B.G."/>
            <person name="Jolley K.A."/>
            <person name="Maiden M.C.J."/>
            <person name="Kehoe M."/>
            <person name="Chanter N."/>
            <person name="Bentley S.D."/>
            <person name="Robinson C."/>
            <person name="Maskell D.J."/>
            <person name="Parkhill J."/>
            <person name="Waller A.S."/>
        </authorList>
    </citation>
    <scope>NUCLEOTIDE SEQUENCE [LARGE SCALE GENOMIC DNA]</scope>
    <source>
        <strain>H70</strain>
    </source>
</reference>
<evidence type="ECO:0000255" key="1">
    <source>
        <dbReference type="HAMAP-Rule" id="MF_00151"/>
    </source>
</evidence>
<gene>
    <name evidence="1" type="primary">coaD</name>
    <name type="ordered locus">SZO_14150</name>
</gene>
<name>COAD_STRS7</name>
<keyword id="KW-0067">ATP-binding</keyword>
<keyword id="KW-0173">Coenzyme A biosynthesis</keyword>
<keyword id="KW-0963">Cytoplasm</keyword>
<keyword id="KW-0460">Magnesium</keyword>
<keyword id="KW-0547">Nucleotide-binding</keyword>
<keyword id="KW-0548">Nucleotidyltransferase</keyword>
<keyword id="KW-0808">Transferase</keyword>
<accession>C0MD70</accession>